<proteinExistence type="inferred from homology"/>
<organism>
    <name type="scientific">Frankia alni (strain DSM 45986 / CECT 9034 / ACN14a)</name>
    <dbReference type="NCBI Taxonomy" id="326424"/>
    <lineage>
        <taxon>Bacteria</taxon>
        <taxon>Bacillati</taxon>
        <taxon>Actinomycetota</taxon>
        <taxon>Actinomycetes</taxon>
        <taxon>Frankiales</taxon>
        <taxon>Frankiaceae</taxon>
        <taxon>Frankia</taxon>
    </lineage>
</organism>
<accession>Q0RB94</accession>
<gene>
    <name evidence="1" type="primary">panC4</name>
    <name type="ordered locus">FRAAL6670</name>
</gene>
<reference key="1">
    <citation type="journal article" date="2007" name="Genome Res.">
        <title>Genome characteristics of facultatively symbiotic Frankia sp. strains reflect host range and host plant biogeography.</title>
        <authorList>
            <person name="Normand P."/>
            <person name="Lapierre P."/>
            <person name="Tisa L.S."/>
            <person name="Gogarten J.P."/>
            <person name="Alloisio N."/>
            <person name="Bagnarol E."/>
            <person name="Bassi C.A."/>
            <person name="Berry A.M."/>
            <person name="Bickhart D.M."/>
            <person name="Choisne N."/>
            <person name="Couloux A."/>
            <person name="Cournoyer B."/>
            <person name="Cruveiller S."/>
            <person name="Daubin V."/>
            <person name="Demange N."/>
            <person name="Francino M.P."/>
            <person name="Goltsman E."/>
            <person name="Huang Y."/>
            <person name="Kopp O.R."/>
            <person name="Labarre L."/>
            <person name="Lapidus A."/>
            <person name="Lavire C."/>
            <person name="Marechal J."/>
            <person name="Martinez M."/>
            <person name="Mastronunzio J.E."/>
            <person name="Mullin B.C."/>
            <person name="Niemann J."/>
            <person name="Pujic P."/>
            <person name="Rawnsley T."/>
            <person name="Rouy Z."/>
            <person name="Schenowitz C."/>
            <person name="Sellstedt A."/>
            <person name="Tavares F."/>
            <person name="Tomkins J.P."/>
            <person name="Vallenet D."/>
            <person name="Valverde C."/>
            <person name="Wall L.G."/>
            <person name="Wang Y."/>
            <person name="Medigue C."/>
            <person name="Benson D.R."/>
        </authorList>
    </citation>
    <scope>NUCLEOTIDE SEQUENCE [LARGE SCALE GENOMIC DNA]</scope>
    <source>
        <strain>DSM 45986 / CECT 9034 / ACN14a</strain>
    </source>
</reference>
<dbReference type="EC" id="6.3.2.1" evidence="1"/>
<dbReference type="EMBL" id="CT573213">
    <property type="protein sequence ID" value="CAJ65293.1"/>
    <property type="molecule type" value="Genomic_DNA"/>
</dbReference>
<dbReference type="SMR" id="Q0RB94"/>
<dbReference type="STRING" id="326424.FRAAL6670"/>
<dbReference type="KEGG" id="fal:FRAAL6670"/>
<dbReference type="eggNOG" id="COG0414">
    <property type="taxonomic scope" value="Bacteria"/>
</dbReference>
<dbReference type="HOGENOM" id="CLU_047148_0_2_11"/>
<dbReference type="OrthoDB" id="9773087at2"/>
<dbReference type="UniPathway" id="UPA00028">
    <property type="reaction ID" value="UER00005"/>
</dbReference>
<dbReference type="Proteomes" id="UP000000657">
    <property type="component" value="Chromosome"/>
</dbReference>
<dbReference type="GO" id="GO:0005829">
    <property type="term" value="C:cytosol"/>
    <property type="evidence" value="ECO:0007669"/>
    <property type="project" value="TreeGrafter"/>
</dbReference>
<dbReference type="GO" id="GO:0005524">
    <property type="term" value="F:ATP binding"/>
    <property type="evidence" value="ECO:0007669"/>
    <property type="project" value="UniProtKB-KW"/>
</dbReference>
<dbReference type="GO" id="GO:0004592">
    <property type="term" value="F:pantoate-beta-alanine ligase activity"/>
    <property type="evidence" value="ECO:0007669"/>
    <property type="project" value="UniProtKB-UniRule"/>
</dbReference>
<dbReference type="GO" id="GO:0015940">
    <property type="term" value="P:pantothenate biosynthetic process"/>
    <property type="evidence" value="ECO:0007669"/>
    <property type="project" value="UniProtKB-UniRule"/>
</dbReference>
<dbReference type="Gene3D" id="3.40.50.620">
    <property type="entry name" value="HUPs"/>
    <property type="match status" value="1"/>
</dbReference>
<dbReference type="Gene3D" id="3.30.1300.10">
    <property type="entry name" value="Pantoate-beta-alanine ligase, C-terminal domain"/>
    <property type="match status" value="1"/>
</dbReference>
<dbReference type="HAMAP" id="MF_00158">
    <property type="entry name" value="PanC"/>
    <property type="match status" value="1"/>
</dbReference>
<dbReference type="InterPro" id="IPR003721">
    <property type="entry name" value="Pantoate_ligase"/>
</dbReference>
<dbReference type="InterPro" id="IPR042176">
    <property type="entry name" value="Pantoate_ligase_C"/>
</dbReference>
<dbReference type="InterPro" id="IPR014729">
    <property type="entry name" value="Rossmann-like_a/b/a_fold"/>
</dbReference>
<dbReference type="NCBIfam" id="TIGR00018">
    <property type="entry name" value="panC"/>
    <property type="match status" value="1"/>
</dbReference>
<dbReference type="PANTHER" id="PTHR21299">
    <property type="entry name" value="CYTIDYLATE KINASE/PANTOATE-BETA-ALANINE LIGASE"/>
    <property type="match status" value="1"/>
</dbReference>
<dbReference type="PANTHER" id="PTHR21299:SF1">
    <property type="entry name" value="PANTOATE--BETA-ALANINE LIGASE"/>
    <property type="match status" value="1"/>
</dbReference>
<dbReference type="Pfam" id="PF02569">
    <property type="entry name" value="Pantoate_ligase"/>
    <property type="match status" value="1"/>
</dbReference>
<dbReference type="SUPFAM" id="SSF52374">
    <property type="entry name" value="Nucleotidylyl transferase"/>
    <property type="match status" value="1"/>
</dbReference>
<keyword id="KW-0067">ATP-binding</keyword>
<keyword id="KW-0963">Cytoplasm</keyword>
<keyword id="KW-0436">Ligase</keyword>
<keyword id="KW-0547">Nucleotide-binding</keyword>
<keyword id="KW-0566">Pantothenate biosynthesis</keyword>
<keyword id="KW-1185">Reference proteome</keyword>
<comment type="function">
    <text evidence="1">Catalyzes the condensation of pantoate with beta-alanine in an ATP-dependent reaction via a pantoyl-adenylate intermediate.</text>
</comment>
<comment type="catalytic activity">
    <reaction evidence="1">
        <text>(R)-pantoate + beta-alanine + ATP = (R)-pantothenate + AMP + diphosphate + H(+)</text>
        <dbReference type="Rhea" id="RHEA:10912"/>
        <dbReference type="ChEBI" id="CHEBI:15378"/>
        <dbReference type="ChEBI" id="CHEBI:15980"/>
        <dbReference type="ChEBI" id="CHEBI:29032"/>
        <dbReference type="ChEBI" id="CHEBI:30616"/>
        <dbReference type="ChEBI" id="CHEBI:33019"/>
        <dbReference type="ChEBI" id="CHEBI:57966"/>
        <dbReference type="ChEBI" id="CHEBI:456215"/>
        <dbReference type="EC" id="6.3.2.1"/>
    </reaction>
</comment>
<comment type="pathway">
    <text evidence="1">Cofactor biosynthesis; (R)-pantothenate biosynthesis; (R)-pantothenate from (R)-pantoate and beta-alanine: step 1/1.</text>
</comment>
<comment type="subunit">
    <text evidence="1">Homodimer.</text>
</comment>
<comment type="subcellular location">
    <subcellularLocation>
        <location evidence="1">Cytoplasm</location>
    </subcellularLocation>
</comment>
<comment type="miscellaneous">
    <text evidence="1">The reaction proceeds by a bi uni uni bi ping pong mechanism.</text>
</comment>
<comment type="similarity">
    <text evidence="1">Belongs to the pantothenate synthetase family.</text>
</comment>
<protein>
    <recommendedName>
        <fullName evidence="1">Pantothenate synthetase 4</fullName>
        <shortName evidence="1">PS 4</shortName>
        <ecNumber evidence="1">6.3.2.1</ecNumber>
    </recommendedName>
    <alternativeName>
        <fullName evidence="1">Pantoate--beta-alanine ligase 4</fullName>
    </alternativeName>
    <alternativeName>
        <fullName evidence="1">Pantoate-activating enzyme 4</fullName>
    </alternativeName>
</protein>
<evidence type="ECO:0000255" key="1">
    <source>
        <dbReference type="HAMAP-Rule" id="MF_00158"/>
    </source>
</evidence>
<sequence>MLVRDRAELRAALVALDRAASSHPPAAAQDAGPARAASRHDRPVRAVVMTMGALHEGHASLLRAARARADQVVATIFVNPLQFGAGEDLDRYPRTLAADLAVCAREGVDVVFAPAVIHDPPPLVRFGAGPLGAVLEGASRPGHFDGMLTLVGTMLHLVQPDLAFFGRKDAQQLVCIRRMVADLAFDVTVIGVETAREPDGLARSSRNVYLTAEQRTEALALSRALAAGAAASADGAPAVLAAARAVLDAADGVDVDYLELAGPEDLGPVRGGPALLLVAARVGTTRLIDNVSLILPTDTQGA</sequence>
<name>PANC4_FRAAA</name>
<feature type="chain" id="PRO_0000305456" description="Pantothenate synthetase 4">
    <location>
        <begin position="1"/>
        <end position="302"/>
    </location>
</feature>
<feature type="active site" description="Proton donor" evidence="1">
    <location>
        <position position="58"/>
    </location>
</feature>
<feature type="binding site" evidence="1">
    <location>
        <begin position="51"/>
        <end position="58"/>
    </location>
    <ligand>
        <name>ATP</name>
        <dbReference type="ChEBI" id="CHEBI:30616"/>
    </ligand>
</feature>
<feature type="binding site" evidence="1">
    <location>
        <position position="82"/>
    </location>
    <ligand>
        <name>(R)-pantoate</name>
        <dbReference type="ChEBI" id="CHEBI:15980"/>
    </ligand>
</feature>
<feature type="binding site" evidence="1">
    <location>
        <position position="82"/>
    </location>
    <ligand>
        <name>beta-alanine</name>
        <dbReference type="ChEBI" id="CHEBI:57966"/>
    </ligand>
</feature>
<feature type="binding site" evidence="1">
    <location>
        <begin position="166"/>
        <end position="169"/>
    </location>
    <ligand>
        <name>ATP</name>
        <dbReference type="ChEBI" id="CHEBI:30616"/>
    </ligand>
</feature>
<feature type="binding site" evidence="1">
    <location>
        <position position="172"/>
    </location>
    <ligand>
        <name>(R)-pantoate</name>
        <dbReference type="ChEBI" id="CHEBI:15980"/>
    </ligand>
</feature>
<feature type="binding site" evidence="1">
    <location>
        <position position="195"/>
    </location>
    <ligand>
        <name>ATP</name>
        <dbReference type="ChEBI" id="CHEBI:30616"/>
    </ligand>
</feature>
<feature type="binding site" evidence="1">
    <location>
        <begin position="203"/>
        <end position="206"/>
    </location>
    <ligand>
        <name>ATP</name>
        <dbReference type="ChEBI" id="CHEBI:30616"/>
    </ligand>
</feature>